<reference key="1">
    <citation type="journal article" date="2010" name="J. Bacteriol.">
        <title>Genome sequence of the deep-rooted Yersinia pestis strain Angola reveals new insights into the evolution and pangenome of the plague bacterium.</title>
        <authorList>
            <person name="Eppinger M."/>
            <person name="Worsham P.L."/>
            <person name="Nikolich M.P."/>
            <person name="Riley D.R."/>
            <person name="Sebastian Y."/>
            <person name="Mou S."/>
            <person name="Achtman M."/>
            <person name="Lindler L.E."/>
            <person name="Ravel J."/>
        </authorList>
    </citation>
    <scope>NUCLEOTIDE SEQUENCE [LARGE SCALE GENOMIC DNA]</scope>
    <source>
        <strain>Angola</strain>
    </source>
</reference>
<accession>A9R117</accession>
<keyword id="KW-0413">Isomerase</keyword>
<keyword id="KW-0819">tRNA processing</keyword>
<protein>
    <recommendedName>
        <fullName evidence="1">tRNA pseudouridine synthase D</fullName>
        <ecNumber evidence="1">5.4.99.27</ecNumber>
    </recommendedName>
    <alternativeName>
        <fullName evidence="1">tRNA pseudouridine(13) synthase</fullName>
    </alternativeName>
    <alternativeName>
        <fullName evidence="1">tRNA pseudouridylate synthase D</fullName>
    </alternativeName>
    <alternativeName>
        <fullName evidence="1">tRNA-uridine isomerase D</fullName>
    </alternativeName>
</protein>
<sequence length="349" mass="39144">MDMENLTWLHGKPTASGILKANPEDFVVVEDLGFEPDGEGEHLLVRIRKNGCNTQFVADYLARFAKLHPRLVSYAGLKDRHAVTEQWFCLHLPGKEAPDLATFELEGCEVLEAVRHKRKLRIGSLKGNAFTLVLRHITDRQDVEQRLQQIAAQGVPNYFGSQRFGRGGNNLVQARLWANNEIRVKERSKRSFYLSASRSAMFNLISSYRLAQQLSTTVLEGDALQLSGRGSWFVAQADELAALQQRVTAGELNITAPLPGDSELGTHGEALAFEQACLAEQTELLSLIKRERVEGSRRAVLLKPQNMISNWWDDVTLELSFWLPAGSFATSVVREIMNQDRADDTDIIE</sequence>
<name>TRUD_YERPG</name>
<comment type="function">
    <text evidence="1">Responsible for synthesis of pseudouridine from uracil-13 in transfer RNAs.</text>
</comment>
<comment type="catalytic activity">
    <reaction evidence="1">
        <text>uridine(13) in tRNA = pseudouridine(13) in tRNA</text>
        <dbReference type="Rhea" id="RHEA:42540"/>
        <dbReference type="Rhea" id="RHEA-COMP:10105"/>
        <dbReference type="Rhea" id="RHEA-COMP:10106"/>
        <dbReference type="ChEBI" id="CHEBI:65314"/>
        <dbReference type="ChEBI" id="CHEBI:65315"/>
        <dbReference type="EC" id="5.4.99.27"/>
    </reaction>
</comment>
<comment type="similarity">
    <text evidence="1">Belongs to the pseudouridine synthase TruD family.</text>
</comment>
<proteinExistence type="inferred from homology"/>
<dbReference type="EC" id="5.4.99.27" evidence="1"/>
<dbReference type="EMBL" id="CP000901">
    <property type="protein sequence ID" value="ABX88041.1"/>
    <property type="molecule type" value="Genomic_DNA"/>
</dbReference>
<dbReference type="RefSeq" id="WP_002209393.1">
    <property type="nucleotide sequence ID" value="NZ_CP009935.1"/>
</dbReference>
<dbReference type="SMR" id="A9R117"/>
<dbReference type="GeneID" id="57975350"/>
<dbReference type="KEGG" id="ypg:YpAngola_A0962"/>
<dbReference type="PATRIC" id="fig|349746.12.peg.1910"/>
<dbReference type="GO" id="GO:0005829">
    <property type="term" value="C:cytosol"/>
    <property type="evidence" value="ECO:0007669"/>
    <property type="project" value="TreeGrafter"/>
</dbReference>
<dbReference type="GO" id="GO:0003723">
    <property type="term" value="F:RNA binding"/>
    <property type="evidence" value="ECO:0007669"/>
    <property type="project" value="InterPro"/>
</dbReference>
<dbReference type="GO" id="GO:0160150">
    <property type="term" value="F:tRNA pseudouridine(13) synthase activity"/>
    <property type="evidence" value="ECO:0007669"/>
    <property type="project" value="UniProtKB-EC"/>
</dbReference>
<dbReference type="GO" id="GO:0031119">
    <property type="term" value="P:tRNA pseudouridine synthesis"/>
    <property type="evidence" value="ECO:0007669"/>
    <property type="project" value="UniProtKB-UniRule"/>
</dbReference>
<dbReference type="CDD" id="cd02575">
    <property type="entry name" value="PseudoU_synth_EcTruD"/>
    <property type="match status" value="1"/>
</dbReference>
<dbReference type="FunFam" id="3.30.2340.10:FF:000001">
    <property type="entry name" value="tRNA pseudouridine synthase D"/>
    <property type="match status" value="1"/>
</dbReference>
<dbReference type="FunFam" id="3.30.2350.20:FF:000001">
    <property type="entry name" value="tRNA pseudouridine synthase D"/>
    <property type="match status" value="1"/>
</dbReference>
<dbReference type="Gene3D" id="3.30.2350.20">
    <property type="entry name" value="TruD, catalytic domain"/>
    <property type="match status" value="1"/>
</dbReference>
<dbReference type="Gene3D" id="3.30.2340.10">
    <property type="entry name" value="TruD, insertion domain"/>
    <property type="match status" value="1"/>
</dbReference>
<dbReference type="HAMAP" id="MF_01082">
    <property type="entry name" value="TruD"/>
    <property type="match status" value="1"/>
</dbReference>
<dbReference type="InterPro" id="IPR020103">
    <property type="entry name" value="PsdUridine_synth_cat_dom_sf"/>
</dbReference>
<dbReference type="InterPro" id="IPR001656">
    <property type="entry name" value="PsdUridine_synth_TruD"/>
</dbReference>
<dbReference type="InterPro" id="IPR020119">
    <property type="entry name" value="PsdUridine_synth_TruD_CS"/>
</dbReference>
<dbReference type="InterPro" id="IPR011760">
    <property type="entry name" value="PsdUridine_synth_TruD_insert"/>
</dbReference>
<dbReference type="InterPro" id="IPR042214">
    <property type="entry name" value="TruD_catalytic"/>
</dbReference>
<dbReference type="InterPro" id="IPR043165">
    <property type="entry name" value="TruD_insert_sf"/>
</dbReference>
<dbReference type="InterPro" id="IPR050170">
    <property type="entry name" value="TruD_pseudoU_synthase"/>
</dbReference>
<dbReference type="NCBIfam" id="NF002155">
    <property type="entry name" value="PRK00984.1-4"/>
    <property type="match status" value="1"/>
</dbReference>
<dbReference type="NCBIfam" id="TIGR00094">
    <property type="entry name" value="tRNA_TruD_broad"/>
    <property type="match status" value="1"/>
</dbReference>
<dbReference type="PANTHER" id="PTHR47811">
    <property type="entry name" value="TRNA PSEUDOURIDINE SYNTHASE D"/>
    <property type="match status" value="1"/>
</dbReference>
<dbReference type="PANTHER" id="PTHR47811:SF1">
    <property type="entry name" value="TRNA PSEUDOURIDINE SYNTHASE D"/>
    <property type="match status" value="1"/>
</dbReference>
<dbReference type="Pfam" id="PF01142">
    <property type="entry name" value="TruD"/>
    <property type="match status" value="2"/>
</dbReference>
<dbReference type="SUPFAM" id="SSF55120">
    <property type="entry name" value="Pseudouridine synthase"/>
    <property type="match status" value="1"/>
</dbReference>
<dbReference type="PROSITE" id="PS50984">
    <property type="entry name" value="TRUD"/>
    <property type="match status" value="1"/>
</dbReference>
<dbReference type="PROSITE" id="PS01268">
    <property type="entry name" value="UPF0024"/>
    <property type="match status" value="1"/>
</dbReference>
<gene>
    <name evidence="1" type="primary">truD</name>
    <name type="ordered locus">YpAngola_A0962</name>
</gene>
<organism>
    <name type="scientific">Yersinia pestis bv. Antiqua (strain Angola)</name>
    <dbReference type="NCBI Taxonomy" id="349746"/>
    <lineage>
        <taxon>Bacteria</taxon>
        <taxon>Pseudomonadati</taxon>
        <taxon>Pseudomonadota</taxon>
        <taxon>Gammaproteobacteria</taxon>
        <taxon>Enterobacterales</taxon>
        <taxon>Yersiniaceae</taxon>
        <taxon>Yersinia</taxon>
    </lineage>
</organism>
<feature type="chain" id="PRO_1000136861" description="tRNA pseudouridine synthase D">
    <location>
        <begin position="1"/>
        <end position="349"/>
    </location>
</feature>
<feature type="domain" description="TRUD" evidence="1">
    <location>
        <begin position="154"/>
        <end position="302"/>
    </location>
</feature>
<feature type="active site" description="Nucleophile" evidence="1">
    <location>
        <position position="79"/>
    </location>
</feature>
<feature type="binding site" evidence="1">
    <location>
        <position position="26"/>
    </location>
    <ligand>
        <name>substrate</name>
    </ligand>
</feature>
<feature type="binding site" evidence="1">
    <location>
        <position position="128"/>
    </location>
    <ligand>
        <name>substrate</name>
    </ligand>
</feature>
<feature type="binding site" evidence="1">
    <location>
        <position position="328"/>
    </location>
    <ligand>
        <name>substrate</name>
    </ligand>
</feature>
<evidence type="ECO:0000255" key="1">
    <source>
        <dbReference type="HAMAP-Rule" id="MF_01082"/>
    </source>
</evidence>